<dbReference type="EC" id="2.7.8.-" evidence="1"/>
<dbReference type="EMBL" id="BA000028">
    <property type="protein sequence ID" value="BAC15001.1"/>
    <property type="molecule type" value="Genomic_DNA"/>
</dbReference>
<dbReference type="RefSeq" id="WP_011067441.1">
    <property type="nucleotide sequence ID" value="NC_004193.1"/>
</dbReference>
<dbReference type="SMR" id="Q8EM16"/>
<dbReference type="STRING" id="221109.gene:10735297"/>
<dbReference type="KEGG" id="oih:OB3045"/>
<dbReference type="eggNOG" id="COG1502">
    <property type="taxonomic scope" value="Bacteria"/>
</dbReference>
<dbReference type="HOGENOM" id="CLU_038053_1_1_9"/>
<dbReference type="OrthoDB" id="9762009at2"/>
<dbReference type="PhylomeDB" id="Q8EM16"/>
<dbReference type="Proteomes" id="UP000000822">
    <property type="component" value="Chromosome"/>
</dbReference>
<dbReference type="GO" id="GO:0005886">
    <property type="term" value="C:plasma membrane"/>
    <property type="evidence" value="ECO:0007669"/>
    <property type="project" value="UniProtKB-SubCell"/>
</dbReference>
<dbReference type="GO" id="GO:0008808">
    <property type="term" value="F:cardiolipin synthase activity"/>
    <property type="evidence" value="ECO:0007669"/>
    <property type="project" value="InterPro"/>
</dbReference>
<dbReference type="GO" id="GO:0032049">
    <property type="term" value="P:cardiolipin biosynthetic process"/>
    <property type="evidence" value="ECO:0007669"/>
    <property type="project" value="InterPro"/>
</dbReference>
<dbReference type="CDD" id="cd09110">
    <property type="entry name" value="PLDc_CLS_1"/>
    <property type="match status" value="1"/>
</dbReference>
<dbReference type="CDD" id="cd09112">
    <property type="entry name" value="PLDc_CLS_2"/>
    <property type="match status" value="1"/>
</dbReference>
<dbReference type="FunFam" id="3.30.870.10:FF:000014">
    <property type="entry name" value="Cardiolipin synthase"/>
    <property type="match status" value="1"/>
</dbReference>
<dbReference type="FunFam" id="3.30.870.10:FF:000021">
    <property type="entry name" value="Cardiolipin synthase"/>
    <property type="match status" value="1"/>
</dbReference>
<dbReference type="Gene3D" id="3.30.870.10">
    <property type="entry name" value="Endonuclease Chain A"/>
    <property type="match status" value="2"/>
</dbReference>
<dbReference type="HAMAP" id="MF_01916">
    <property type="entry name" value="Cardiolipin_synth_Cls"/>
    <property type="match status" value="1"/>
</dbReference>
<dbReference type="InterPro" id="IPR030874">
    <property type="entry name" value="Cardiolipin_synth_Firmi"/>
</dbReference>
<dbReference type="InterPro" id="IPR022924">
    <property type="entry name" value="Cardiolipin_synthase"/>
</dbReference>
<dbReference type="InterPro" id="IPR027379">
    <property type="entry name" value="CLS_N"/>
</dbReference>
<dbReference type="InterPro" id="IPR025202">
    <property type="entry name" value="PLD-like_dom"/>
</dbReference>
<dbReference type="InterPro" id="IPR001736">
    <property type="entry name" value="PLipase_D/transphosphatidylase"/>
</dbReference>
<dbReference type="NCBIfam" id="TIGR04265">
    <property type="entry name" value="bac_cardiolipin"/>
    <property type="match status" value="1"/>
</dbReference>
<dbReference type="PANTHER" id="PTHR21248">
    <property type="entry name" value="CARDIOLIPIN SYNTHASE"/>
    <property type="match status" value="1"/>
</dbReference>
<dbReference type="PANTHER" id="PTHR21248:SF22">
    <property type="entry name" value="PHOSPHOLIPASE D"/>
    <property type="match status" value="1"/>
</dbReference>
<dbReference type="Pfam" id="PF13091">
    <property type="entry name" value="PLDc_2"/>
    <property type="match status" value="2"/>
</dbReference>
<dbReference type="Pfam" id="PF13396">
    <property type="entry name" value="PLDc_N"/>
    <property type="match status" value="1"/>
</dbReference>
<dbReference type="SMART" id="SM00155">
    <property type="entry name" value="PLDc"/>
    <property type="match status" value="2"/>
</dbReference>
<dbReference type="SUPFAM" id="SSF56024">
    <property type="entry name" value="Phospholipase D/nuclease"/>
    <property type="match status" value="2"/>
</dbReference>
<dbReference type="PROSITE" id="PS50035">
    <property type="entry name" value="PLD"/>
    <property type="match status" value="2"/>
</dbReference>
<evidence type="ECO:0000255" key="1">
    <source>
        <dbReference type="HAMAP-Rule" id="MF_01916"/>
    </source>
</evidence>
<gene>
    <name type="primary">cls</name>
    <name type="ordered locus">OB3045</name>
</gene>
<keyword id="KW-1003">Cell membrane</keyword>
<keyword id="KW-0444">Lipid biosynthesis</keyword>
<keyword id="KW-0443">Lipid metabolism</keyword>
<keyword id="KW-0472">Membrane</keyword>
<keyword id="KW-0594">Phospholipid biosynthesis</keyword>
<keyword id="KW-1208">Phospholipid metabolism</keyword>
<keyword id="KW-1185">Reference proteome</keyword>
<keyword id="KW-0677">Repeat</keyword>
<keyword id="KW-0808">Transferase</keyword>
<keyword id="KW-0812">Transmembrane</keyword>
<keyword id="KW-1133">Transmembrane helix</keyword>
<organism>
    <name type="scientific">Oceanobacillus iheyensis (strain DSM 14371 / CIP 107618 / JCM 11309 / KCTC 3954 / HTE831)</name>
    <dbReference type="NCBI Taxonomy" id="221109"/>
    <lineage>
        <taxon>Bacteria</taxon>
        <taxon>Bacillati</taxon>
        <taxon>Bacillota</taxon>
        <taxon>Bacilli</taxon>
        <taxon>Bacillales</taxon>
        <taxon>Bacillaceae</taxon>
        <taxon>Oceanobacillus</taxon>
    </lineage>
</organism>
<comment type="function">
    <text evidence="1">Catalyzes the reversible phosphatidyl group transfer from one phosphatidylglycerol molecule to another to form cardiolipin (CL) (diphosphatidylglycerol) and glycerol.</text>
</comment>
<comment type="catalytic activity">
    <reaction evidence="1">
        <text>2 a 1,2-diacyl-sn-glycero-3-phospho-(1'-sn-glycerol) = a cardiolipin + glycerol</text>
        <dbReference type="Rhea" id="RHEA:31451"/>
        <dbReference type="ChEBI" id="CHEBI:17754"/>
        <dbReference type="ChEBI" id="CHEBI:62237"/>
        <dbReference type="ChEBI" id="CHEBI:64716"/>
    </reaction>
</comment>
<comment type="subcellular location">
    <subcellularLocation>
        <location evidence="1">Cell membrane</location>
        <topology evidence="1">Multi-pass membrane protein</topology>
    </subcellularLocation>
</comment>
<comment type="similarity">
    <text evidence="1">Belongs to the phospholipase D family. Cardiolipin synthase subfamily.</text>
</comment>
<reference key="1">
    <citation type="journal article" date="2002" name="Nucleic Acids Res.">
        <title>Genome sequence of Oceanobacillus iheyensis isolated from the Iheya Ridge and its unexpected adaptive capabilities to extreme environments.</title>
        <authorList>
            <person name="Takami H."/>
            <person name="Takaki Y."/>
            <person name="Uchiyama I."/>
        </authorList>
    </citation>
    <scope>NUCLEOTIDE SEQUENCE [LARGE SCALE GENOMIC DNA]</scope>
    <source>
        <strain>DSM 14371 / CIP 107618 / JCM 11309 / KCTC 3954 / HTE831</strain>
    </source>
</reference>
<feature type="chain" id="PRO_0000201259" description="Cardiolipin synthase">
    <location>
        <begin position="1"/>
        <end position="479"/>
    </location>
</feature>
<feature type="transmembrane region" description="Helical" evidence="1">
    <location>
        <begin position="5"/>
        <end position="25"/>
    </location>
</feature>
<feature type="transmembrane region" description="Helical" evidence="1">
    <location>
        <begin position="34"/>
        <end position="54"/>
    </location>
</feature>
<feature type="domain" description="PLD phosphodiesterase 1" evidence="1">
    <location>
        <begin position="216"/>
        <end position="243"/>
    </location>
</feature>
<feature type="domain" description="PLD phosphodiesterase 2" evidence="1">
    <location>
        <begin position="392"/>
        <end position="419"/>
    </location>
</feature>
<feature type="active site" evidence="1">
    <location>
        <position position="221"/>
    </location>
</feature>
<feature type="active site" evidence="1">
    <location>
        <position position="223"/>
    </location>
</feature>
<feature type="active site" evidence="1">
    <location>
        <position position="228"/>
    </location>
</feature>
<feature type="active site" evidence="1">
    <location>
        <position position="397"/>
    </location>
</feature>
<feature type="active site" evidence="1">
    <location>
        <position position="399"/>
    </location>
</feature>
<feature type="active site" evidence="1">
    <location>
        <position position="404"/>
    </location>
</feature>
<accession>Q8EM16</accession>
<sequence>MGITSLLLGLTFVLNIALAISIIFLERKDPTSSWAWVMVLLFIPILGFFLYLIFGKPISNRKIFSWDKKSRLGVKTTVQSQLRLLEENQFEFNQPDLIEHKDLVYLHLKNDEAIYTQNNGVDIFTDGQTKFDALLEDIEKAKKHIHIQYYIMRSDGLGNRLADMLIKKVNEGVEVRVLYDDMGSRSLKNSYIKRLKRAGVMVEAFFPSRFIVNFKINYRNHRKLAIIDGYIGYLGGFNVGDEYLGINKKFGYWRDTHLRVIGDAVQSMQTRFILDWNQASRDTILYNEDYYQTVSAGNVGMQIVTSGPDSEYEQIKNGYIKMIMEANDYICIQTPYFIPDESLRDALKIAVLSGVHVKIMIPNKPDHPFVYWATLSYCGDLIQAGAEIFIYQNGFLHAKTIIVDGRIASVGTANIDVRSFRLNFEVNGFLYDSEVVNRLQNEFDADLEKSTQMTRKLYDQRSIGIRFKESISRLISPVL</sequence>
<name>CLS_OCEIH</name>
<proteinExistence type="inferred from homology"/>
<protein>
    <recommendedName>
        <fullName evidence="1">Cardiolipin synthase</fullName>
        <shortName evidence="1">CL synthase</shortName>
        <ecNumber evidence="1">2.7.8.-</ecNumber>
    </recommendedName>
</protein>